<organism>
    <name type="scientific">Xenopus laevis</name>
    <name type="common">African clawed frog</name>
    <dbReference type="NCBI Taxonomy" id="8355"/>
    <lineage>
        <taxon>Eukaryota</taxon>
        <taxon>Metazoa</taxon>
        <taxon>Chordata</taxon>
        <taxon>Craniata</taxon>
        <taxon>Vertebrata</taxon>
        <taxon>Euteleostomi</taxon>
        <taxon>Amphibia</taxon>
        <taxon>Batrachia</taxon>
        <taxon>Anura</taxon>
        <taxon>Pipoidea</taxon>
        <taxon>Pipidae</taxon>
        <taxon>Xenopodinae</taxon>
        <taxon>Xenopus</taxon>
        <taxon>Xenopus</taxon>
    </lineage>
</organism>
<gene>
    <name type="primary">pif1</name>
</gene>
<proteinExistence type="evidence at transcript level"/>
<evidence type="ECO:0000255" key="1">
    <source>
        <dbReference type="HAMAP-Rule" id="MF_03176"/>
    </source>
</evidence>
<evidence type="ECO:0000256" key="2">
    <source>
        <dbReference type="SAM" id="MobiDB-lite"/>
    </source>
</evidence>
<evidence type="ECO:0000305" key="3"/>
<dbReference type="EC" id="5.6.2.3" evidence="1"/>
<dbReference type="EMBL" id="DQ119644">
    <property type="protein sequence ID" value="AAZ41379.1"/>
    <property type="molecule type" value="mRNA"/>
</dbReference>
<dbReference type="EMBL" id="BC097805">
    <property type="protein sequence ID" value="AAH97805.2"/>
    <property type="molecule type" value="mRNA"/>
</dbReference>
<dbReference type="RefSeq" id="NP_001089530.1">
    <property type="nucleotide sequence ID" value="NM_001096061.1"/>
</dbReference>
<dbReference type="SMR" id="Q0R4F1"/>
<dbReference type="DNASU" id="734585"/>
<dbReference type="GeneID" id="734585"/>
<dbReference type="KEGG" id="xla:734585"/>
<dbReference type="AGR" id="Xenbase:XB-GENE-5924693"/>
<dbReference type="CTD" id="734585"/>
<dbReference type="Xenbase" id="XB-GENE-5924693">
    <property type="gene designation" value="pif1.L"/>
</dbReference>
<dbReference type="OrthoDB" id="272985at2759"/>
<dbReference type="Proteomes" id="UP000186698">
    <property type="component" value="Chromosome 4L"/>
</dbReference>
<dbReference type="Bgee" id="734585">
    <property type="expression patterns" value="Expressed in egg cell and 11 other cell types or tissues"/>
</dbReference>
<dbReference type="GO" id="GO:0005739">
    <property type="term" value="C:mitochondrion"/>
    <property type="evidence" value="ECO:0007669"/>
    <property type="project" value="UniProtKB-SubCell"/>
</dbReference>
<dbReference type="GO" id="GO:0005634">
    <property type="term" value="C:nucleus"/>
    <property type="evidence" value="ECO:0007669"/>
    <property type="project" value="UniProtKB-SubCell"/>
</dbReference>
<dbReference type="GO" id="GO:0043139">
    <property type="term" value="F:5'-3' DNA helicase activity"/>
    <property type="evidence" value="ECO:0007669"/>
    <property type="project" value="UniProtKB-UniRule"/>
</dbReference>
<dbReference type="GO" id="GO:0005524">
    <property type="term" value="F:ATP binding"/>
    <property type="evidence" value="ECO:0007669"/>
    <property type="project" value="UniProtKB-UniRule"/>
</dbReference>
<dbReference type="GO" id="GO:0016887">
    <property type="term" value="F:ATP hydrolysis activity"/>
    <property type="evidence" value="ECO:0007669"/>
    <property type="project" value="InterPro"/>
</dbReference>
<dbReference type="GO" id="GO:0003677">
    <property type="term" value="F:DNA binding"/>
    <property type="evidence" value="ECO:0007669"/>
    <property type="project" value="UniProtKB-KW"/>
</dbReference>
<dbReference type="GO" id="GO:0006310">
    <property type="term" value="P:DNA recombination"/>
    <property type="evidence" value="ECO:0007669"/>
    <property type="project" value="UniProtKB-UniRule"/>
</dbReference>
<dbReference type="GO" id="GO:0006281">
    <property type="term" value="P:DNA repair"/>
    <property type="evidence" value="ECO:0007669"/>
    <property type="project" value="UniProtKB-UniRule"/>
</dbReference>
<dbReference type="GO" id="GO:0000002">
    <property type="term" value="P:mitochondrial genome maintenance"/>
    <property type="evidence" value="ECO:0007669"/>
    <property type="project" value="UniProtKB-UniRule"/>
</dbReference>
<dbReference type="GO" id="GO:0000723">
    <property type="term" value="P:telomere maintenance"/>
    <property type="evidence" value="ECO:0007669"/>
    <property type="project" value="InterPro"/>
</dbReference>
<dbReference type="CDD" id="cd18037">
    <property type="entry name" value="DEXSc_Pif1_like"/>
    <property type="match status" value="1"/>
</dbReference>
<dbReference type="CDD" id="cd18809">
    <property type="entry name" value="SF1_C_RecD"/>
    <property type="match status" value="1"/>
</dbReference>
<dbReference type="FunFam" id="3.40.50.300:FF:000805">
    <property type="entry name" value="ATP-dependent DNA helicase PIF1"/>
    <property type="match status" value="1"/>
</dbReference>
<dbReference type="FunFam" id="3.40.50.300:FF:003367">
    <property type="entry name" value="ATP-dependent DNA helicase PIF1"/>
    <property type="match status" value="1"/>
</dbReference>
<dbReference type="Gene3D" id="3.40.50.300">
    <property type="entry name" value="P-loop containing nucleotide triphosphate hydrolases"/>
    <property type="match status" value="2"/>
</dbReference>
<dbReference type="HAMAP" id="MF_03176">
    <property type="entry name" value="PIF1"/>
    <property type="match status" value="1"/>
</dbReference>
<dbReference type="InterPro" id="IPR003593">
    <property type="entry name" value="AAA+_ATPase"/>
</dbReference>
<dbReference type="InterPro" id="IPR010285">
    <property type="entry name" value="DNA_helicase_pif1-like_DEAD"/>
</dbReference>
<dbReference type="InterPro" id="IPR027417">
    <property type="entry name" value="P-loop_NTPase"/>
</dbReference>
<dbReference type="InterPro" id="IPR049163">
    <property type="entry name" value="Pif1-like_2B_dom"/>
</dbReference>
<dbReference type="InterPro" id="IPR051055">
    <property type="entry name" value="PIF1_helicase"/>
</dbReference>
<dbReference type="InterPro" id="IPR048293">
    <property type="entry name" value="PIF1_RRM3_pfh1"/>
</dbReference>
<dbReference type="PANTHER" id="PTHR47642">
    <property type="entry name" value="ATP-DEPENDENT DNA HELICASE"/>
    <property type="match status" value="1"/>
</dbReference>
<dbReference type="PANTHER" id="PTHR47642:SF7">
    <property type="entry name" value="ATP-DEPENDENT DNA HELICASE PIF1"/>
    <property type="match status" value="1"/>
</dbReference>
<dbReference type="Pfam" id="PF25344">
    <property type="entry name" value="PH_LRR1"/>
    <property type="match status" value="1"/>
</dbReference>
<dbReference type="Pfam" id="PF05970">
    <property type="entry name" value="PIF1"/>
    <property type="match status" value="1"/>
</dbReference>
<dbReference type="Pfam" id="PF21530">
    <property type="entry name" value="Pif1_2B_dom"/>
    <property type="match status" value="1"/>
</dbReference>
<dbReference type="SMART" id="SM00382">
    <property type="entry name" value="AAA"/>
    <property type="match status" value="1"/>
</dbReference>
<dbReference type="SUPFAM" id="SSF52540">
    <property type="entry name" value="P-loop containing nucleoside triphosphate hydrolases"/>
    <property type="match status" value="2"/>
</dbReference>
<name>PIF1_XENLA</name>
<keyword id="KW-0067">ATP-binding</keyword>
<keyword id="KW-0227">DNA damage</keyword>
<keyword id="KW-0233">DNA recombination</keyword>
<keyword id="KW-0234">DNA repair</keyword>
<keyword id="KW-0238">DNA-binding</keyword>
<keyword id="KW-0347">Helicase</keyword>
<keyword id="KW-0378">Hydrolase</keyword>
<keyword id="KW-0413">Isomerase</keyword>
<keyword id="KW-0496">Mitochondrion</keyword>
<keyword id="KW-0547">Nucleotide-binding</keyword>
<keyword id="KW-0539">Nucleus</keyword>
<keyword id="KW-1185">Reference proteome</keyword>
<comment type="function">
    <text evidence="1">DNA-dependent ATPase and 5'-3' DNA helicase required for the maintenance of both mitochondrial and nuclear genome stability.</text>
</comment>
<comment type="catalytic activity">
    <reaction evidence="1">
        <text>Couples ATP hydrolysis with the unwinding of duplex DNA at the replication fork by translocating in the 5'-3' direction. This creates two antiparallel DNA single strands (ssDNA). The leading ssDNA polymer is the template for DNA polymerase III holoenzyme which synthesizes a continuous strand.</text>
        <dbReference type="EC" id="5.6.2.3"/>
    </reaction>
</comment>
<comment type="catalytic activity">
    <reaction evidence="1">
        <text>ATP + H2O = ADP + phosphate + H(+)</text>
        <dbReference type="Rhea" id="RHEA:13065"/>
        <dbReference type="ChEBI" id="CHEBI:15377"/>
        <dbReference type="ChEBI" id="CHEBI:15378"/>
        <dbReference type="ChEBI" id="CHEBI:30616"/>
        <dbReference type="ChEBI" id="CHEBI:43474"/>
        <dbReference type="ChEBI" id="CHEBI:456216"/>
        <dbReference type="EC" id="5.6.2.3"/>
    </reaction>
</comment>
<comment type="cofactor">
    <cofactor evidence="1">
        <name>Mg(2+)</name>
        <dbReference type="ChEBI" id="CHEBI:18420"/>
    </cofactor>
</comment>
<comment type="subunit">
    <text evidence="1">Monomer.</text>
</comment>
<comment type="subcellular location">
    <subcellularLocation>
        <location evidence="1">Nucleus</location>
    </subcellularLocation>
    <subcellularLocation>
        <location evidence="1">Mitochondrion</location>
    </subcellularLocation>
</comment>
<comment type="similarity">
    <text evidence="1">Belongs to the helicase family. PIF1 subfamily.</text>
</comment>
<sequence length="635" mass="70954">MMLAEQLSPEIQSSITIEYLNSSGQALKRKVIRNSFISLGRNEFRDLVLKVSDGKLQQNFVIKQIQLFTRFIRDGKASVVLLPENIQLLISNCPADKLKHFMKTLLIKHEAGKKEKPVNERTRLLSGLPRMFETISPVQKKDVEQANEMRAKANSETPVKGKGLSHKGVNGGNRCQQKRTRTESSNSLIADLRPSKKPTLSMPKQIRLSTEQSLVLNTVLSGRNVFFTGSAGTGKSYLLKRIVGALPPKSTYATASTGVAACHIGGTTLHAFAGIGSGKASLEQCIELAKRPGVRQHWTSCKHLIIDEISMVEGEFFDKLEAVARAVRGKDEPFGGIQLIVCGDFLQLPPVTQASSQTKFCFQGKSWRKCIHLTMELTEVRRQTDKNFISLLQAIRLGRCTDDVARQLLQTTNHKVERDGILATRLCTHKDDVEITNERRLQQLPGESHSYEALDSDPMLVKTINAQCPVNQQIQLKKGAQVMLAKNLDVSRGLVNGARGVVIKFEEGNKNLPVVRFLCGVTEVIKPDRWVFKGHGGIYLSRQQLPLKLAWAISIHKSQGMSLDCVEISLSRVFESGQAYVALSRARNLEGLRVMDFDPKVVRANPYVLQFYHQMQKERALRQTSLDDFLDKENC</sequence>
<accession>Q0R4F1</accession>
<accession>Q4V7N6</accession>
<protein>
    <recommendedName>
        <fullName evidence="1">ATP-dependent DNA helicase PIF1</fullName>
        <ecNumber evidence="1">5.6.2.3</ecNumber>
    </recommendedName>
    <alternativeName>
        <fullName evidence="1">DNA 5'-3' helicase PIF1</fullName>
    </alternativeName>
    <alternativeName>
        <fullName evidence="1">DNA repair and recombination helicase PIF1</fullName>
    </alternativeName>
</protein>
<reference key="1">
    <citation type="submission" date="2005-07" db="EMBL/GenBank/DDBJ databases">
        <authorList>
            <person name="Nakaoka H."/>
            <person name="Nishiyama A."/>
            <person name="Ishikawa F."/>
        </authorList>
    </citation>
    <scope>NUCLEOTIDE SEQUENCE [MRNA]</scope>
</reference>
<reference key="2">
    <citation type="submission" date="2005-06" db="EMBL/GenBank/DDBJ databases">
        <authorList>
            <consortium name="NIH - Xenopus Gene Collection (XGC) project"/>
        </authorList>
    </citation>
    <scope>NUCLEOTIDE SEQUENCE [LARGE SCALE MRNA] OF 2-635</scope>
    <source>
        <tissue>Egg</tissue>
    </source>
</reference>
<feature type="chain" id="PRO_0000295094" description="ATP-dependent DNA helicase PIF1">
    <location>
        <begin position="1"/>
        <end position="635"/>
    </location>
</feature>
<feature type="DNA-binding region" evidence="1">
    <location>
        <begin position="578"/>
        <end position="597"/>
    </location>
</feature>
<feature type="region of interest" description="Disordered" evidence="2">
    <location>
        <begin position="150"/>
        <end position="187"/>
    </location>
</feature>
<feature type="binding site" evidence="1">
    <location>
        <begin position="229"/>
        <end position="236"/>
    </location>
    <ligand>
        <name>ATP</name>
        <dbReference type="ChEBI" id="CHEBI:30616"/>
    </ligand>
</feature>
<feature type="sequence conflict" description="In Ref. 2; AAH97805." evidence="3" ref="2">
    <original>E</original>
    <variation>K</variation>
    <location>
        <position position="5"/>
    </location>
</feature>